<sequence>MDPCECSKSGNCNCGGSCTCTNCSCKSCKKSCCPCCPSGCTKCASGCVCKGKTCDTSCCQ</sequence>
<keyword id="KW-0479">Metal-binding</keyword>
<keyword id="KW-0480">Metal-thiolate cluster</keyword>
<gene>
    <name type="primary">mta</name>
    <name type="synonym">mt</name>
</gene>
<protein>
    <recommendedName>
        <fullName>Metallothionein A</fullName>
        <shortName>MT-A</shortName>
        <shortName>MT-I</shortName>
    </recommendedName>
</protein>
<proteinExistence type="inferred from homology"/>
<evidence type="ECO:0000250" key="1"/>
<evidence type="ECO:0000250" key="2">
    <source>
        <dbReference type="UniProtKB" id="P02795"/>
    </source>
</evidence>
<evidence type="ECO:0000250" key="3">
    <source>
        <dbReference type="UniProtKB" id="P62339"/>
    </source>
</evidence>
<evidence type="ECO:0000305" key="4"/>
<accession>O93450</accession>
<dbReference type="EMBL" id="AJ007950">
    <property type="protein sequence ID" value="CAA07785.1"/>
    <property type="molecule type" value="mRNA"/>
</dbReference>
<dbReference type="SMR" id="O93450"/>
<dbReference type="GO" id="GO:0046872">
    <property type="term" value="F:metal ion binding"/>
    <property type="evidence" value="ECO:0007669"/>
    <property type="project" value="UniProtKB-KW"/>
</dbReference>
<dbReference type="FunFam" id="4.10.10.10:FF:000001">
    <property type="entry name" value="Metallothionein"/>
    <property type="match status" value="1"/>
</dbReference>
<dbReference type="Gene3D" id="4.10.10.10">
    <property type="entry name" value="Metallothionein Isoform II"/>
    <property type="match status" value="1"/>
</dbReference>
<dbReference type="InterPro" id="IPR017854">
    <property type="entry name" value="Metalthion_dom_sf"/>
</dbReference>
<dbReference type="InterPro" id="IPR023587">
    <property type="entry name" value="Metalthion_dom_sf_vert"/>
</dbReference>
<dbReference type="InterPro" id="IPR000006">
    <property type="entry name" value="Metalthion_vert"/>
</dbReference>
<dbReference type="InterPro" id="IPR018064">
    <property type="entry name" value="Metalthion_vert_metal_BS"/>
</dbReference>
<dbReference type="PANTHER" id="PTHR23299">
    <property type="entry name" value="METALLOTHIONEIN"/>
    <property type="match status" value="1"/>
</dbReference>
<dbReference type="PANTHER" id="PTHR23299:SF24">
    <property type="entry name" value="METALLOTHIONEIN-1X"/>
    <property type="match status" value="1"/>
</dbReference>
<dbReference type="Pfam" id="PF00131">
    <property type="entry name" value="Metallothio"/>
    <property type="match status" value="1"/>
</dbReference>
<dbReference type="PRINTS" id="PR00860">
    <property type="entry name" value="MTVERTEBRATE"/>
</dbReference>
<dbReference type="SUPFAM" id="SSF57868">
    <property type="entry name" value="Metallothionein"/>
    <property type="match status" value="1"/>
</dbReference>
<dbReference type="PROSITE" id="PS00203">
    <property type="entry name" value="METALLOTHIONEIN_VRT"/>
    <property type="match status" value="1"/>
</dbReference>
<organism>
    <name type="scientific">Parachaenichthys charcoti</name>
    <name type="common">Charcot's dragonfish</name>
    <name type="synonym">Chaenichthys charcoti</name>
    <dbReference type="NCBI Taxonomy" id="36187"/>
    <lineage>
        <taxon>Eukaryota</taxon>
        <taxon>Metazoa</taxon>
        <taxon>Chordata</taxon>
        <taxon>Craniata</taxon>
        <taxon>Vertebrata</taxon>
        <taxon>Euteleostomi</taxon>
        <taxon>Actinopterygii</taxon>
        <taxon>Neopterygii</taxon>
        <taxon>Teleostei</taxon>
        <taxon>Neoteleostei</taxon>
        <taxon>Acanthomorphata</taxon>
        <taxon>Eupercaria</taxon>
        <taxon>Perciformes</taxon>
        <taxon>Notothenioidei</taxon>
        <taxon>Bathydraconidae</taxon>
        <taxon>Parachaenichthys</taxon>
    </lineage>
</organism>
<reference key="1">
    <citation type="journal article" date="1999" name="Mol. Biol. Evol.">
        <title>Metallothioneins in antarctic fish: evidence for independent duplication and gene conversion.</title>
        <authorList>
            <person name="Bargelloni L."/>
            <person name="Scudiero R."/>
            <person name="Parisi E."/>
            <person name="Carginale V."/>
            <person name="Capasso C."/>
            <person name="Patarnello T."/>
        </authorList>
    </citation>
    <scope>NUCLEOTIDE SEQUENCE [MRNA]</scope>
    <source>
        <tissue>Liver</tissue>
    </source>
</reference>
<feature type="chain" id="PRO_0000197305" description="Metallothionein A">
    <location>
        <begin position="1"/>
        <end position="60"/>
    </location>
</feature>
<feature type="region of interest" description="Beta">
    <location>
        <begin position="1"/>
        <end position="28"/>
    </location>
</feature>
<feature type="region of interest" description="Alpha">
    <location>
        <begin position="29"/>
        <end position="60"/>
    </location>
</feature>
<feature type="binding site" evidence="2">
    <location>
        <position position="4"/>
    </location>
    <ligand>
        <name>a divalent metal cation</name>
        <dbReference type="ChEBI" id="CHEBI:60240"/>
        <label>1</label>
        <note>in cluster B</note>
    </ligand>
</feature>
<feature type="binding site" evidence="2">
    <location>
        <position position="6"/>
    </location>
    <ligand>
        <name>a divalent metal cation</name>
        <dbReference type="ChEBI" id="CHEBI:60240"/>
        <label>1</label>
        <note>in cluster B</note>
    </ligand>
</feature>
<feature type="binding site" evidence="2">
    <location>
        <position position="6"/>
    </location>
    <ligand>
        <name>a divalent metal cation</name>
        <dbReference type="ChEBI" id="CHEBI:60240"/>
        <label>2</label>
        <note>in cluster B</note>
    </ligand>
</feature>
<feature type="binding site" evidence="2">
    <location>
        <position position="12"/>
    </location>
    <ligand>
        <name>a divalent metal cation</name>
        <dbReference type="ChEBI" id="CHEBI:60240"/>
        <label>2</label>
        <note>in cluster B</note>
    </ligand>
</feature>
<feature type="binding site" evidence="2">
    <location>
        <position position="14"/>
    </location>
    <ligand>
        <name>a divalent metal cation</name>
        <dbReference type="ChEBI" id="CHEBI:60240"/>
        <label>2</label>
        <note>in cluster B</note>
    </ligand>
</feature>
<feature type="binding site" evidence="2">
    <location>
        <position position="14"/>
    </location>
    <ligand>
        <name>a divalent metal cation</name>
        <dbReference type="ChEBI" id="CHEBI:60240"/>
        <label>3</label>
        <note>in cluster B</note>
    </ligand>
</feature>
<feature type="binding site" evidence="2">
    <location>
        <position position="18"/>
    </location>
    <ligand>
        <name>a divalent metal cation</name>
        <dbReference type="ChEBI" id="CHEBI:60240"/>
        <label>3</label>
        <note>in cluster B</note>
    </ligand>
</feature>
<feature type="binding site" evidence="2">
    <location>
        <position position="20"/>
    </location>
    <ligand>
        <name>a divalent metal cation</name>
        <dbReference type="ChEBI" id="CHEBI:60240"/>
        <label>1</label>
        <note>in cluster B</note>
    </ligand>
</feature>
<feature type="binding site" evidence="2">
    <location>
        <position position="23"/>
    </location>
    <ligand>
        <name>a divalent metal cation</name>
        <dbReference type="ChEBI" id="CHEBI:60240"/>
        <label>1</label>
        <note>in cluster B</note>
    </ligand>
</feature>
<feature type="binding site" evidence="2">
    <location>
        <position position="23"/>
    </location>
    <ligand>
        <name>a divalent metal cation</name>
        <dbReference type="ChEBI" id="CHEBI:60240"/>
        <label>3</label>
        <note>in cluster B</note>
    </ligand>
</feature>
<feature type="binding site" evidence="2">
    <location>
        <position position="25"/>
    </location>
    <ligand>
        <name>a divalent metal cation</name>
        <dbReference type="ChEBI" id="CHEBI:60240"/>
        <label>2</label>
        <note>in cluster B</note>
    </ligand>
</feature>
<feature type="binding site" evidence="2">
    <location>
        <position position="28"/>
    </location>
    <ligand>
        <name>a divalent metal cation</name>
        <dbReference type="ChEBI" id="CHEBI:60240"/>
        <label>3</label>
        <note>in cluster B</note>
    </ligand>
</feature>
<feature type="binding site" evidence="2">
    <location>
        <position position="32"/>
    </location>
    <ligand>
        <name>a divalent metal cation</name>
        <dbReference type="ChEBI" id="CHEBI:60240"/>
        <label>4</label>
        <note>in cluster A</note>
    </ligand>
</feature>
<feature type="binding site" evidence="2">
    <location>
        <position position="33"/>
    </location>
    <ligand>
        <name>a divalent metal cation</name>
        <dbReference type="ChEBI" id="CHEBI:60240"/>
        <label>4</label>
        <note>in cluster A</note>
    </ligand>
</feature>
<feature type="binding site" evidence="2">
    <location>
        <position position="33"/>
    </location>
    <ligand>
        <name>a divalent metal cation</name>
        <dbReference type="ChEBI" id="CHEBI:60240"/>
        <label>5</label>
        <note>in cluster A</note>
    </ligand>
</feature>
<feature type="binding site" evidence="2">
    <location>
        <position position="35"/>
    </location>
    <ligand>
        <name>a divalent metal cation</name>
        <dbReference type="ChEBI" id="CHEBI:60240"/>
        <label>5</label>
        <note>in cluster A</note>
    </ligand>
</feature>
<feature type="binding site" evidence="2">
    <location>
        <position position="36"/>
    </location>
    <ligand>
        <name>a divalent metal cation</name>
        <dbReference type="ChEBI" id="CHEBI:60240"/>
        <label>5</label>
        <note>in cluster A</note>
    </ligand>
</feature>
<feature type="binding site" evidence="2">
    <location>
        <position position="36"/>
    </location>
    <ligand>
        <name>a divalent metal cation</name>
        <dbReference type="ChEBI" id="CHEBI:60240"/>
        <label>6</label>
        <note>in cluster A</note>
    </ligand>
</feature>
<feature type="binding site" evidence="2">
    <location>
        <position position="40"/>
    </location>
    <ligand>
        <name>a divalent metal cation</name>
        <dbReference type="ChEBI" id="CHEBI:60240"/>
        <label>6</label>
        <note>in cluster A</note>
    </ligand>
</feature>
<feature type="binding site" evidence="2">
    <location>
        <position position="43"/>
    </location>
    <ligand>
        <name>a divalent metal cation</name>
        <dbReference type="ChEBI" id="CHEBI:60240"/>
        <label>4</label>
        <note>in cluster A</note>
    </ligand>
</feature>
<feature type="binding site" evidence="2">
    <location>
        <position position="43"/>
    </location>
    <ligand>
        <name>a divalent metal cation</name>
        <dbReference type="ChEBI" id="CHEBI:60240"/>
        <label>6</label>
        <note>in cluster A</note>
    </ligand>
</feature>
<feature type="binding site" evidence="2">
    <location>
        <position position="47"/>
    </location>
    <ligand>
        <name>a divalent metal cation</name>
        <dbReference type="ChEBI" id="CHEBI:60240"/>
        <label>4</label>
        <note>in cluster A</note>
    </ligand>
</feature>
<feature type="binding site" evidence="2">
    <location>
        <position position="49"/>
    </location>
    <ligand>
        <name>a divalent metal cation</name>
        <dbReference type="ChEBI" id="CHEBI:60240"/>
        <label>5</label>
        <note>in cluster A</note>
    </ligand>
</feature>
<feature type="binding site" evidence="2">
    <location>
        <position position="49"/>
    </location>
    <ligand>
        <name>a divalent metal cation</name>
        <dbReference type="ChEBI" id="CHEBI:60240"/>
        <label>7</label>
        <note>in cluster A</note>
    </ligand>
</feature>
<feature type="binding site" evidence="3">
    <location>
        <position position="54"/>
    </location>
    <ligand>
        <name>a divalent metal cation</name>
        <dbReference type="ChEBI" id="CHEBI:60240"/>
        <label>7</label>
        <note>in cluster A</note>
    </ligand>
</feature>
<feature type="binding site" evidence="2">
    <location>
        <position position="58"/>
    </location>
    <ligand>
        <name>a divalent metal cation</name>
        <dbReference type="ChEBI" id="CHEBI:60240"/>
        <label>7</label>
        <note>in cluster A</note>
    </ligand>
</feature>
<feature type="binding site" evidence="2">
    <location>
        <position position="59"/>
    </location>
    <ligand>
        <name>a divalent metal cation</name>
        <dbReference type="ChEBI" id="CHEBI:60240"/>
        <label>6</label>
        <note>in cluster A</note>
    </ligand>
</feature>
<feature type="binding site" evidence="2">
    <location>
        <position position="59"/>
    </location>
    <ligand>
        <name>a divalent metal cation</name>
        <dbReference type="ChEBI" id="CHEBI:60240"/>
        <label>7</label>
        <note>in cluster A</note>
    </ligand>
</feature>
<name>MTA_PARCR</name>
<comment type="function">
    <text evidence="1">Metallothioneins have a high content of cysteine residues that bind various heavy metals.</text>
</comment>
<comment type="domain">
    <text>Class I metallothioneins contain 2 metal-binding domains: four divalent ions are chelated within cluster A of the alpha domain and are coordinated via cysteinyl thiolate bridges to 11 cysteine ligands. Cluster B, the corresponding region within the beta domain, can ligate three divalent ions to 9 cysteines.</text>
</comment>
<comment type="similarity">
    <text evidence="4">Belongs to the metallothionein superfamily. Type 1 family.</text>
</comment>